<organism>
    <name type="scientific">Xenopus laevis</name>
    <name type="common">African clawed frog</name>
    <dbReference type="NCBI Taxonomy" id="8355"/>
    <lineage>
        <taxon>Eukaryota</taxon>
        <taxon>Metazoa</taxon>
        <taxon>Chordata</taxon>
        <taxon>Craniata</taxon>
        <taxon>Vertebrata</taxon>
        <taxon>Euteleostomi</taxon>
        <taxon>Amphibia</taxon>
        <taxon>Batrachia</taxon>
        <taxon>Anura</taxon>
        <taxon>Pipoidea</taxon>
        <taxon>Pipidae</taxon>
        <taxon>Xenopodinae</taxon>
        <taxon>Xenopus</taxon>
        <taxon>Xenopus</taxon>
    </lineage>
</organism>
<reference key="1">
    <citation type="journal article" date="1991" name="Development">
        <title>Cephalic expression and molecular characterization of Xenopus En-2.</title>
        <authorList>
            <person name="Hemmati-Brivanlou A."/>
            <person name="de la Torre J.R."/>
            <person name="Holt C."/>
            <person name="Harland R.M."/>
        </authorList>
    </citation>
    <scope>NUCLEOTIDE SEQUENCE [MRNA]</scope>
    <source>
        <tissue>Head</tissue>
    </source>
</reference>
<accession>P52729</accession>
<proteinExistence type="evidence at transcript level"/>
<protein>
    <recommendedName>
        <fullName>Homeobox protein engrailed-2-A</fullName>
        <shortName>En-2A</shortName>
        <shortName>Homeobox protein en-2-A</shortName>
    </recommendedName>
    <alternativeName>
        <fullName>En2 1.4</fullName>
    </alternativeName>
</protein>
<name>HME2A_XENLA</name>
<sequence length="265" mass="29897">MEENEQNNREVEPQQESGEESNRGILHQAPPGNHQPHHRITNFFIDNILRPEFGRRKEGISHQDELYTERDTGALSGAESGHHRVNVPEGAGGSSKVITVTGEKKSDLAMEETLKSRGLNGDHSLSSDSDSSQTSSKATQQPMLWPAWVYCTRYSDRPSSGPRSRKPKKKSVSKEDKRPRTAFTADQLQRLKAEFQTNRYLTEQRRQSLAQELSLNESQIKIWFQNKRAKIKKATGNKNSLALHLMAQGLYNHSTTSKDGKSDSE</sequence>
<gene>
    <name type="primary">en2-a</name>
    <name type="synonym">en2a</name>
</gene>
<comment type="subcellular location">
    <subcellularLocation>
        <location evidence="1">Nucleus</location>
    </subcellularLocation>
</comment>
<comment type="developmental stage">
    <text>In addition to the main band of expression at the midbrain-hindbrain boundary, the protein is expressed in the mandibular arch, the optic tectum and the region of anterior pituitary.</text>
</comment>
<comment type="similarity">
    <text evidence="3">Belongs to the engrailed homeobox family.</text>
</comment>
<dbReference type="EMBL" id="X62973">
    <property type="protein sequence ID" value="CAA44723.1"/>
    <property type="molecule type" value="mRNA"/>
</dbReference>
<dbReference type="PIR" id="S19004">
    <property type="entry name" value="S19004"/>
</dbReference>
<dbReference type="RefSeq" id="NP_001095213.1">
    <property type="nucleotide sequence ID" value="NM_001101743.1"/>
</dbReference>
<dbReference type="SMR" id="P52729"/>
<dbReference type="GeneID" id="378588"/>
<dbReference type="KEGG" id="xla:378588"/>
<dbReference type="AGR" id="Xenbase:XB-GENE-866462"/>
<dbReference type="CTD" id="378588"/>
<dbReference type="Xenbase" id="XB-GENE-866462">
    <property type="gene designation" value="en2.L"/>
</dbReference>
<dbReference type="OMA" id="GGQPMLW"/>
<dbReference type="OrthoDB" id="6159439at2759"/>
<dbReference type="Proteomes" id="UP000186698">
    <property type="component" value="Chromosome 6L"/>
</dbReference>
<dbReference type="Bgee" id="378588">
    <property type="expression patterns" value="Expressed in neurula embryo and 1 other cell type or tissue"/>
</dbReference>
<dbReference type="GO" id="GO:0005634">
    <property type="term" value="C:nucleus"/>
    <property type="evidence" value="ECO:0000318"/>
    <property type="project" value="GO_Central"/>
</dbReference>
<dbReference type="GO" id="GO:0000981">
    <property type="term" value="F:DNA-binding transcription factor activity, RNA polymerase II-specific"/>
    <property type="evidence" value="ECO:0000318"/>
    <property type="project" value="GO_Central"/>
</dbReference>
<dbReference type="GO" id="GO:0000978">
    <property type="term" value="F:RNA polymerase II cis-regulatory region sequence-specific DNA binding"/>
    <property type="evidence" value="ECO:0000318"/>
    <property type="project" value="GO_Central"/>
</dbReference>
<dbReference type="GO" id="GO:0030182">
    <property type="term" value="P:neuron differentiation"/>
    <property type="evidence" value="ECO:0007669"/>
    <property type="project" value="TreeGrafter"/>
</dbReference>
<dbReference type="GO" id="GO:0006357">
    <property type="term" value="P:regulation of transcription by RNA polymerase II"/>
    <property type="evidence" value="ECO:0000318"/>
    <property type="project" value="GO_Central"/>
</dbReference>
<dbReference type="CDD" id="cd00086">
    <property type="entry name" value="homeodomain"/>
    <property type="match status" value="1"/>
</dbReference>
<dbReference type="FunFam" id="1.10.10.60:FF:000167">
    <property type="entry name" value="Homeobox protein engrailed-like"/>
    <property type="match status" value="1"/>
</dbReference>
<dbReference type="Gene3D" id="1.10.10.60">
    <property type="entry name" value="Homeodomain-like"/>
    <property type="match status" value="1"/>
</dbReference>
<dbReference type="InterPro" id="IPR050720">
    <property type="entry name" value="Engrailed_Homeobox_TFs"/>
</dbReference>
<dbReference type="InterPro" id="IPR001356">
    <property type="entry name" value="HD"/>
</dbReference>
<dbReference type="InterPro" id="IPR000747">
    <property type="entry name" value="HD_engrailed"/>
</dbReference>
<dbReference type="InterPro" id="IPR020479">
    <property type="entry name" value="HD_metazoa"/>
</dbReference>
<dbReference type="InterPro" id="IPR019549">
    <property type="entry name" value="Homeobox-engrailed_C-terminal"/>
</dbReference>
<dbReference type="InterPro" id="IPR019737">
    <property type="entry name" value="Homeobox-engrailed_CS"/>
</dbReference>
<dbReference type="InterPro" id="IPR017970">
    <property type="entry name" value="Homeobox_CS"/>
</dbReference>
<dbReference type="InterPro" id="IPR009057">
    <property type="entry name" value="Homeodomain-like_sf"/>
</dbReference>
<dbReference type="PANTHER" id="PTHR24341">
    <property type="entry name" value="HOMEOBOX PROTEIN ENGRAILED"/>
    <property type="match status" value="1"/>
</dbReference>
<dbReference type="PANTHER" id="PTHR24341:SF5">
    <property type="entry name" value="HOMEOBOX PROTEIN ENGRAILED-2"/>
    <property type="match status" value="1"/>
</dbReference>
<dbReference type="Pfam" id="PF10525">
    <property type="entry name" value="Engrail_1_C_sig"/>
    <property type="match status" value="1"/>
</dbReference>
<dbReference type="Pfam" id="PF00046">
    <property type="entry name" value="Homeodomain"/>
    <property type="match status" value="1"/>
</dbReference>
<dbReference type="PRINTS" id="PR00026">
    <property type="entry name" value="ENGRAILED"/>
</dbReference>
<dbReference type="PRINTS" id="PR00024">
    <property type="entry name" value="HOMEOBOX"/>
</dbReference>
<dbReference type="SMART" id="SM00389">
    <property type="entry name" value="HOX"/>
    <property type="match status" value="1"/>
</dbReference>
<dbReference type="SUPFAM" id="SSF46689">
    <property type="entry name" value="Homeodomain-like"/>
    <property type="match status" value="1"/>
</dbReference>
<dbReference type="PROSITE" id="PS00033">
    <property type="entry name" value="ENGRAILED"/>
    <property type="match status" value="1"/>
</dbReference>
<dbReference type="PROSITE" id="PS00027">
    <property type="entry name" value="HOMEOBOX_1"/>
    <property type="match status" value="1"/>
</dbReference>
<dbReference type="PROSITE" id="PS50071">
    <property type="entry name" value="HOMEOBOX_2"/>
    <property type="match status" value="1"/>
</dbReference>
<keyword id="KW-0217">Developmental protein</keyword>
<keyword id="KW-0238">DNA-binding</keyword>
<keyword id="KW-0371">Homeobox</keyword>
<keyword id="KW-0539">Nucleus</keyword>
<keyword id="KW-1185">Reference proteome</keyword>
<feature type="chain" id="PRO_0000196070" description="Homeobox protein engrailed-2-A">
    <location>
        <begin position="1"/>
        <end position="265"/>
    </location>
</feature>
<feature type="DNA-binding region" description="Homeobox" evidence="1">
    <location>
        <begin position="176"/>
        <end position="235"/>
    </location>
</feature>
<feature type="region of interest" description="Disordered" evidence="2">
    <location>
        <begin position="1"/>
        <end position="38"/>
    </location>
</feature>
<feature type="region of interest" description="Disordered" evidence="2">
    <location>
        <begin position="75"/>
        <end position="140"/>
    </location>
</feature>
<feature type="region of interest" description="Disordered" evidence="2">
    <location>
        <begin position="156"/>
        <end position="181"/>
    </location>
</feature>
<feature type="compositionally biased region" description="Basic and acidic residues" evidence="2">
    <location>
        <begin position="1"/>
        <end position="12"/>
    </location>
</feature>
<feature type="compositionally biased region" description="Basic and acidic residues" evidence="2">
    <location>
        <begin position="102"/>
        <end position="115"/>
    </location>
</feature>
<feature type="compositionally biased region" description="Low complexity" evidence="2">
    <location>
        <begin position="122"/>
        <end position="136"/>
    </location>
</feature>
<evidence type="ECO:0000255" key="1">
    <source>
        <dbReference type="PROSITE-ProRule" id="PRU00108"/>
    </source>
</evidence>
<evidence type="ECO:0000256" key="2">
    <source>
        <dbReference type="SAM" id="MobiDB-lite"/>
    </source>
</evidence>
<evidence type="ECO:0000305" key="3"/>